<reference key="1">
    <citation type="submission" date="2006-12" db="EMBL/GenBank/DDBJ databases">
        <title>Complete sequence of Halorhodospira halophila SL1.</title>
        <authorList>
            <consortium name="US DOE Joint Genome Institute"/>
            <person name="Copeland A."/>
            <person name="Lucas S."/>
            <person name="Lapidus A."/>
            <person name="Barry K."/>
            <person name="Detter J.C."/>
            <person name="Glavina del Rio T."/>
            <person name="Hammon N."/>
            <person name="Israni S."/>
            <person name="Dalin E."/>
            <person name="Tice H."/>
            <person name="Pitluck S."/>
            <person name="Saunders E."/>
            <person name="Brettin T."/>
            <person name="Bruce D."/>
            <person name="Han C."/>
            <person name="Tapia R."/>
            <person name="Schmutz J."/>
            <person name="Larimer F."/>
            <person name="Land M."/>
            <person name="Hauser L."/>
            <person name="Kyrpides N."/>
            <person name="Mikhailova N."/>
            <person name="Hoff W."/>
            <person name="Richardson P."/>
        </authorList>
    </citation>
    <scope>NUCLEOTIDE SEQUENCE [LARGE SCALE GENOMIC DNA]</scope>
    <source>
        <strain>DSM 244 / SL1</strain>
    </source>
</reference>
<protein>
    <recommendedName>
        <fullName evidence="1">N-acetyl-gamma-glutamyl-phosphate reductase</fullName>
        <shortName evidence="1">AGPR</shortName>
        <ecNumber evidence="1">1.2.1.38</ecNumber>
    </recommendedName>
    <alternativeName>
        <fullName evidence="1">N-acetyl-glutamate semialdehyde dehydrogenase</fullName>
        <shortName evidence="1">NAGSA dehydrogenase</shortName>
    </alternativeName>
</protein>
<sequence length="344" mass="36678">MIEVGIVGGTGYTGMELLRLVARHPKLRLAEITSRAEAGTRVDELVPALEGAVDNVFTAPDTERLSRCDVVFFATPNGIAMESAPALLEAGCRVIDLGADFRLRDPAVWTEWYGMSHSCPELLEEAVYGLPEANRDALPGARLVANPGCYPTAVALGLLPLLEAGALADGPVVADCKSGVSGAGRAAKVATLFCEANEGFKAYGASGHRHLPEIEQTLARVAGAPVDVTFVPHLVPMTRGMQATLHVVVDRPLDELEALYRQRYADEPFVHLVASGGHPETRWVRGTNHCRIGLHQPPGRPDRAVILSVIDNLTKGAAGQAVQNLNRMFGLEETAGLEGLAYVP</sequence>
<feature type="chain" id="PRO_1000010999" description="N-acetyl-gamma-glutamyl-phosphate reductase">
    <location>
        <begin position="1"/>
        <end position="344"/>
    </location>
</feature>
<feature type="active site" evidence="1">
    <location>
        <position position="149"/>
    </location>
</feature>
<comment type="function">
    <text evidence="1">Catalyzes the NADPH-dependent reduction of N-acetyl-5-glutamyl phosphate to yield N-acetyl-L-glutamate 5-semialdehyde.</text>
</comment>
<comment type="catalytic activity">
    <reaction evidence="1">
        <text>N-acetyl-L-glutamate 5-semialdehyde + phosphate + NADP(+) = N-acetyl-L-glutamyl 5-phosphate + NADPH + H(+)</text>
        <dbReference type="Rhea" id="RHEA:21588"/>
        <dbReference type="ChEBI" id="CHEBI:15378"/>
        <dbReference type="ChEBI" id="CHEBI:29123"/>
        <dbReference type="ChEBI" id="CHEBI:43474"/>
        <dbReference type="ChEBI" id="CHEBI:57783"/>
        <dbReference type="ChEBI" id="CHEBI:57936"/>
        <dbReference type="ChEBI" id="CHEBI:58349"/>
        <dbReference type="EC" id="1.2.1.38"/>
    </reaction>
</comment>
<comment type="pathway">
    <text evidence="1">Amino-acid biosynthesis; L-arginine biosynthesis; N(2)-acetyl-L-ornithine from L-glutamate: step 3/4.</text>
</comment>
<comment type="subcellular location">
    <subcellularLocation>
        <location evidence="1">Cytoplasm</location>
    </subcellularLocation>
</comment>
<comment type="similarity">
    <text evidence="1">Belongs to the NAGSA dehydrogenase family. Type 1 subfamily.</text>
</comment>
<evidence type="ECO:0000255" key="1">
    <source>
        <dbReference type="HAMAP-Rule" id="MF_00150"/>
    </source>
</evidence>
<name>ARGC_HALHL</name>
<organism>
    <name type="scientific">Halorhodospira halophila (strain DSM 244 / SL1)</name>
    <name type="common">Ectothiorhodospira halophila (strain DSM 244 / SL1)</name>
    <dbReference type="NCBI Taxonomy" id="349124"/>
    <lineage>
        <taxon>Bacteria</taxon>
        <taxon>Pseudomonadati</taxon>
        <taxon>Pseudomonadota</taxon>
        <taxon>Gammaproteobacteria</taxon>
        <taxon>Chromatiales</taxon>
        <taxon>Ectothiorhodospiraceae</taxon>
        <taxon>Halorhodospira</taxon>
    </lineage>
</organism>
<dbReference type="EC" id="1.2.1.38" evidence="1"/>
<dbReference type="EMBL" id="CP000544">
    <property type="protein sequence ID" value="ABM61656.1"/>
    <property type="molecule type" value="Genomic_DNA"/>
</dbReference>
<dbReference type="RefSeq" id="WP_011813679.1">
    <property type="nucleotide sequence ID" value="NC_008789.1"/>
</dbReference>
<dbReference type="SMR" id="A1WVE4"/>
<dbReference type="STRING" id="349124.Hhal_0880"/>
<dbReference type="KEGG" id="hha:Hhal_0880"/>
<dbReference type="eggNOG" id="COG0002">
    <property type="taxonomic scope" value="Bacteria"/>
</dbReference>
<dbReference type="HOGENOM" id="CLU_006384_0_1_6"/>
<dbReference type="OrthoDB" id="9801289at2"/>
<dbReference type="UniPathway" id="UPA00068">
    <property type="reaction ID" value="UER00108"/>
</dbReference>
<dbReference type="Proteomes" id="UP000000647">
    <property type="component" value="Chromosome"/>
</dbReference>
<dbReference type="GO" id="GO:0005737">
    <property type="term" value="C:cytoplasm"/>
    <property type="evidence" value="ECO:0007669"/>
    <property type="project" value="UniProtKB-SubCell"/>
</dbReference>
<dbReference type="GO" id="GO:0003942">
    <property type="term" value="F:N-acetyl-gamma-glutamyl-phosphate reductase activity"/>
    <property type="evidence" value="ECO:0007669"/>
    <property type="project" value="UniProtKB-UniRule"/>
</dbReference>
<dbReference type="GO" id="GO:0051287">
    <property type="term" value="F:NAD binding"/>
    <property type="evidence" value="ECO:0007669"/>
    <property type="project" value="InterPro"/>
</dbReference>
<dbReference type="GO" id="GO:0070401">
    <property type="term" value="F:NADP+ binding"/>
    <property type="evidence" value="ECO:0007669"/>
    <property type="project" value="InterPro"/>
</dbReference>
<dbReference type="GO" id="GO:0006526">
    <property type="term" value="P:L-arginine biosynthetic process"/>
    <property type="evidence" value="ECO:0007669"/>
    <property type="project" value="UniProtKB-UniRule"/>
</dbReference>
<dbReference type="CDD" id="cd23934">
    <property type="entry name" value="AGPR_1_C"/>
    <property type="match status" value="1"/>
</dbReference>
<dbReference type="CDD" id="cd17895">
    <property type="entry name" value="AGPR_1_N"/>
    <property type="match status" value="1"/>
</dbReference>
<dbReference type="FunFam" id="3.30.360.10:FF:000014">
    <property type="entry name" value="N-acetyl-gamma-glutamyl-phosphate reductase"/>
    <property type="match status" value="1"/>
</dbReference>
<dbReference type="Gene3D" id="3.30.360.10">
    <property type="entry name" value="Dihydrodipicolinate Reductase, domain 2"/>
    <property type="match status" value="1"/>
</dbReference>
<dbReference type="Gene3D" id="3.40.50.720">
    <property type="entry name" value="NAD(P)-binding Rossmann-like Domain"/>
    <property type="match status" value="1"/>
</dbReference>
<dbReference type="HAMAP" id="MF_00150">
    <property type="entry name" value="ArgC_type1"/>
    <property type="match status" value="1"/>
</dbReference>
<dbReference type="InterPro" id="IPR023013">
    <property type="entry name" value="AGPR_AS"/>
</dbReference>
<dbReference type="InterPro" id="IPR000706">
    <property type="entry name" value="AGPR_type-1"/>
</dbReference>
<dbReference type="InterPro" id="IPR036291">
    <property type="entry name" value="NAD(P)-bd_dom_sf"/>
</dbReference>
<dbReference type="InterPro" id="IPR050085">
    <property type="entry name" value="NAGSA_dehydrogenase"/>
</dbReference>
<dbReference type="InterPro" id="IPR000534">
    <property type="entry name" value="Semialdehyde_DH_NAD-bd"/>
</dbReference>
<dbReference type="NCBIfam" id="TIGR01850">
    <property type="entry name" value="argC"/>
    <property type="match status" value="1"/>
</dbReference>
<dbReference type="PANTHER" id="PTHR32338:SF10">
    <property type="entry name" value="N-ACETYL-GAMMA-GLUTAMYL-PHOSPHATE REDUCTASE, CHLOROPLASTIC-RELATED"/>
    <property type="match status" value="1"/>
</dbReference>
<dbReference type="PANTHER" id="PTHR32338">
    <property type="entry name" value="N-ACETYL-GAMMA-GLUTAMYL-PHOSPHATE REDUCTASE, CHLOROPLASTIC-RELATED-RELATED"/>
    <property type="match status" value="1"/>
</dbReference>
<dbReference type="Pfam" id="PF01118">
    <property type="entry name" value="Semialdhyde_dh"/>
    <property type="match status" value="1"/>
</dbReference>
<dbReference type="Pfam" id="PF22698">
    <property type="entry name" value="Semialdhyde_dhC_1"/>
    <property type="match status" value="1"/>
</dbReference>
<dbReference type="SMART" id="SM00859">
    <property type="entry name" value="Semialdhyde_dh"/>
    <property type="match status" value="1"/>
</dbReference>
<dbReference type="SUPFAM" id="SSF55347">
    <property type="entry name" value="Glyceraldehyde-3-phosphate dehydrogenase-like, C-terminal domain"/>
    <property type="match status" value="1"/>
</dbReference>
<dbReference type="SUPFAM" id="SSF51735">
    <property type="entry name" value="NAD(P)-binding Rossmann-fold domains"/>
    <property type="match status" value="1"/>
</dbReference>
<dbReference type="PROSITE" id="PS01224">
    <property type="entry name" value="ARGC"/>
    <property type="match status" value="1"/>
</dbReference>
<accession>A1WVE4</accession>
<keyword id="KW-0028">Amino-acid biosynthesis</keyword>
<keyword id="KW-0055">Arginine biosynthesis</keyword>
<keyword id="KW-0963">Cytoplasm</keyword>
<keyword id="KW-0521">NADP</keyword>
<keyword id="KW-0560">Oxidoreductase</keyword>
<keyword id="KW-1185">Reference proteome</keyword>
<gene>
    <name evidence="1" type="primary">argC</name>
    <name type="ordered locus">Hhal_0880</name>
</gene>
<proteinExistence type="inferred from homology"/>